<sequence length="416" mass="43918">MITRVRSELTRYLRTETVGGAILLVAAAIALLWVNSPWGDSYLRMTETVLAIEPLHLELTLADWTKDGLLAVFFFVAGLELKRELVVGELADPKRAALPIIAAVGGVVTPALIAAVIGHGAPGMDKGWAIPVATDIAFALGVLALTGSRIPATARVFLLSLAVVDDLLAIILIAVLFTVGVSLLWLLAAAACMAGWWLAQRRRLRTPLVYVPLALVTWYALHEAGVHPTLAGVALGLLTRVRPDPDEEWAPAARLEHLIQPVSAGICVPLFALFAAGVPLNATVFGELFTDRLALAVMLGLLLGKTIGIFGISWVAIRFGLATRPSGLGYRDMFALSVLGAIGFTVSLLVAELALPDGDTVELAKAAVLITSLAASLAGSALLLRRGRVHQARQDALELQPDEGDASDPSEGGSLR</sequence>
<keyword id="KW-0050">Antiport</keyword>
<keyword id="KW-1003">Cell membrane</keyword>
<keyword id="KW-0406">Ion transport</keyword>
<keyword id="KW-0472">Membrane</keyword>
<keyword id="KW-1185">Reference proteome</keyword>
<keyword id="KW-0915">Sodium</keyword>
<keyword id="KW-0739">Sodium transport</keyword>
<keyword id="KW-0812">Transmembrane</keyword>
<keyword id="KW-1133">Transmembrane helix</keyword>
<keyword id="KW-0813">Transport</keyword>
<protein>
    <recommendedName>
        <fullName evidence="1">Na(+)/H(+) antiporter NhaA</fullName>
    </recommendedName>
    <alternativeName>
        <fullName evidence="1">Sodium/proton antiporter NhaA</fullName>
    </alternativeName>
</protein>
<evidence type="ECO:0000255" key="1">
    <source>
        <dbReference type="HAMAP-Rule" id="MF_01844"/>
    </source>
</evidence>
<evidence type="ECO:0000256" key="2">
    <source>
        <dbReference type="SAM" id="MobiDB-lite"/>
    </source>
</evidence>
<proteinExistence type="inferred from homology"/>
<name>NHAA_NOCFA</name>
<reference key="1">
    <citation type="journal article" date="2004" name="Proc. Natl. Acad. Sci. U.S.A.">
        <title>The complete genomic sequence of Nocardia farcinica IFM 10152.</title>
        <authorList>
            <person name="Ishikawa J."/>
            <person name="Yamashita A."/>
            <person name="Mikami Y."/>
            <person name="Hoshino Y."/>
            <person name="Kurita H."/>
            <person name="Hotta K."/>
            <person name="Shiba T."/>
            <person name="Hattori M."/>
        </authorList>
    </citation>
    <scope>NUCLEOTIDE SEQUENCE [LARGE SCALE GENOMIC DNA]</scope>
    <source>
        <strain>IFM 10152</strain>
    </source>
</reference>
<gene>
    <name evidence="1" type="primary">nhaA</name>
    <name type="ordered locus">NFA_3540</name>
</gene>
<accession>Q5Z2Z5</accession>
<feature type="chain" id="PRO_0000334348" description="Na(+)/H(+) antiporter NhaA">
    <location>
        <begin position="1"/>
        <end position="416"/>
    </location>
</feature>
<feature type="transmembrane region" description="Helical" evidence="1">
    <location>
        <begin position="18"/>
        <end position="38"/>
    </location>
</feature>
<feature type="transmembrane region" description="Helical" evidence="1">
    <location>
        <begin position="59"/>
        <end position="79"/>
    </location>
</feature>
<feature type="transmembrane region" description="Helical" evidence="1">
    <location>
        <begin position="97"/>
        <end position="117"/>
    </location>
</feature>
<feature type="transmembrane region" description="Helical" evidence="1">
    <location>
        <begin position="127"/>
        <end position="147"/>
    </location>
</feature>
<feature type="transmembrane region" description="Helical" evidence="1">
    <location>
        <begin position="167"/>
        <end position="187"/>
    </location>
</feature>
<feature type="transmembrane region" description="Helical" evidence="1">
    <location>
        <begin position="265"/>
        <end position="285"/>
    </location>
</feature>
<feature type="transmembrane region" description="Helical" evidence="1">
    <location>
        <begin position="297"/>
        <end position="317"/>
    </location>
</feature>
<feature type="transmembrane region" description="Helical" evidence="1">
    <location>
        <begin position="333"/>
        <end position="353"/>
    </location>
</feature>
<feature type="transmembrane region" description="Helical" evidence="1">
    <location>
        <begin position="363"/>
        <end position="383"/>
    </location>
</feature>
<feature type="region of interest" description="Disordered" evidence="2">
    <location>
        <begin position="396"/>
        <end position="416"/>
    </location>
</feature>
<dbReference type="EMBL" id="AP006618">
    <property type="protein sequence ID" value="BAD55196.1"/>
    <property type="molecule type" value="Genomic_DNA"/>
</dbReference>
<dbReference type="RefSeq" id="WP_011206883.1">
    <property type="nucleotide sequence ID" value="NC_006361.1"/>
</dbReference>
<dbReference type="SMR" id="Q5Z2Z5"/>
<dbReference type="STRING" id="247156.NFA_3540"/>
<dbReference type="GeneID" id="61131193"/>
<dbReference type="KEGG" id="nfa:NFA_3540"/>
<dbReference type="eggNOG" id="COG3004">
    <property type="taxonomic scope" value="Bacteria"/>
</dbReference>
<dbReference type="HOGENOM" id="CLU_015803_0_0_11"/>
<dbReference type="OrthoDB" id="9808135at2"/>
<dbReference type="Proteomes" id="UP000006820">
    <property type="component" value="Chromosome"/>
</dbReference>
<dbReference type="GO" id="GO:0005886">
    <property type="term" value="C:plasma membrane"/>
    <property type="evidence" value="ECO:0007669"/>
    <property type="project" value="UniProtKB-SubCell"/>
</dbReference>
<dbReference type="GO" id="GO:0015385">
    <property type="term" value="F:sodium:proton antiporter activity"/>
    <property type="evidence" value="ECO:0007669"/>
    <property type="project" value="TreeGrafter"/>
</dbReference>
<dbReference type="GO" id="GO:0006885">
    <property type="term" value="P:regulation of pH"/>
    <property type="evidence" value="ECO:0007669"/>
    <property type="project" value="InterPro"/>
</dbReference>
<dbReference type="Gene3D" id="1.20.1530.10">
    <property type="entry name" value="Na+/H+ antiporter like domain"/>
    <property type="match status" value="1"/>
</dbReference>
<dbReference type="HAMAP" id="MF_01844">
    <property type="entry name" value="NhaA"/>
    <property type="match status" value="1"/>
</dbReference>
<dbReference type="InterPro" id="IPR023171">
    <property type="entry name" value="Na/H_antiporter_dom_sf"/>
</dbReference>
<dbReference type="InterPro" id="IPR004670">
    <property type="entry name" value="NhaA"/>
</dbReference>
<dbReference type="NCBIfam" id="TIGR00773">
    <property type="entry name" value="NhaA"/>
    <property type="match status" value="1"/>
</dbReference>
<dbReference type="PANTHER" id="PTHR30341:SF0">
    <property type="entry name" value="NA(+)_H(+) ANTIPORTER NHAA"/>
    <property type="match status" value="1"/>
</dbReference>
<dbReference type="PANTHER" id="PTHR30341">
    <property type="entry name" value="SODIUM ION/PROTON ANTIPORTER NHAA-RELATED"/>
    <property type="match status" value="1"/>
</dbReference>
<dbReference type="Pfam" id="PF06965">
    <property type="entry name" value="Na_H_antiport_1"/>
    <property type="match status" value="1"/>
</dbReference>
<organism>
    <name type="scientific">Nocardia farcinica (strain IFM 10152)</name>
    <dbReference type="NCBI Taxonomy" id="247156"/>
    <lineage>
        <taxon>Bacteria</taxon>
        <taxon>Bacillati</taxon>
        <taxon>Actinomycetota</taxon>
        <taxon>Actinomycetes</taxon>
        <taxon>Mycobacteriales</taxon>
        <taxon>Nocardiaceae</taxon>
        <taxon>Nocardia</taxon>
    </lineage>
</organism>
<comment type="function">
    <text evidence="1">Na(+)/H(+) antiporter that extrudes sodium in exchange for external protons.</text>
</comment>
<comment type="catalytic activity">
    <reaction evidence="1">
        <text>Na(+)(in) + 2 H(+)(out) = Na(+)(out) + 2 H(+)(in)</text>
        <dbReference type="Rhea" id="RHEA:29251"/>
        <dbReference type="ChEBI" id="CHEBI:15378"/>
        <dbReference type="ChEBI" id="CHEBI:29101"/>
    </reaction>
    <physiologicalReaction direction="left-to-right" evidence="1">
        <dbReference type="Rhea" id="RHEA:29252"/>
    </physiologicalReaction>
</comment>
<comment type="subcellular location">
    <subcellularLocation>
        <location evidence="1">Cell membrane</location>
        <topology evidence="1">Multi-pass membrane protein</topology>
    </subcellularLocation>
</comment>
<comment type="similarity">
    <text evidence="1">Belongs to the NhaA Na(+)/H(+) (TC 2.A.33) antiporter family.</text>
</comment>